<proteinExistence type="inferred from homology"/>
<accession>Q3IP06</accession>
<feature type="chain" id="PRO_0000365317" description="tRNA (cytidine(56)-2'-O)-methyltransferase">
    <location>
        <begin position="1"/>
        <end position="180"/>
    </location>
</feature>
<feature type="binding site" evidence="1">
    <location>
        <position position="84"/>
    </location>
    <ligand>
        <name>S-adenosyl-L-methionine</name>
        <dbReference type="ChEBI" id="CHEBI:59789"/>
    </ligand>
</feature>
<feature type="binding site" evidence="1">
    <location>
        <begin position="112"/>
        <end position="116"/>
    </location>
    <ligand>
        <name>S-adenosyl-L-methionine</name>
        <dbReference type="ChEBI" id="CHEBI:59789"/>
    </ligand>
</feature>
<sequence length="180" mass="19909">MHGENEVVVLRLGHRPGRDNRMTTHVGLTARALGADRVSIAGAASDSKATIEDITDRFGGPFEVELTTEPRALVRDWAGTVVHLTMYGQRIQDVEADIREAHASGPVLIVVGAEKVPFDVYEQADYNVGVTNQPHSEVAGLAVFLDRLFEGRQLDREWENADRRVVPKETGKRVEPVDEE</sequence>
<protein>
    <recommendedName>
        <fullName evidence="1">tRNA (cytidine(56)-2'-O)-methyltransferase</fullName>
        <ecNumber evidence="1">2.1.1.206</ecNumber>
    </recommendedName>
    <alternativeName>
        <fullName evidence="1">tRNA ribose 2'-O-methyltransferase aTrm56</fullName>
    </alternativeName>
</protein>
<name>TRM56_NATPD</name>
<comment type="function">
    <text evidence="1">Specifically catalyzes the AdoMet-dependent 2'-O-ribose methylation of cytidine at position 56 in tRNAs.</text>
</comment>
<comment type="catalytic activity">
    <reaction evidence="1">
        <text>cytidine(56) in tRNA + S-adenosyl-L-methionine = 2'-O-methylcytidine(56) in tRNA + S-adenosyl-L-homocysteine + H(+)</text>
        <dbReference type="Rhea" id="RHEA:42968"/>
        <dbReference type="Rhea" id="RHEA-COMP:10308"/>
        <dbReference type="Rhea" id="RHEA-COMP:10309"/>
        <dbReference type="ChEBI" id="CHEBI:15378"/>
        <dbReference type="ChEBI" id="CHEBI:57856"/>
        <dbReference type="ChEBI" id="CHEBI:59789"/>
        <dbReference type="ChEBI" id="CHEBI:74495"/>
        <dbReference type="ChEBI" id="CHEBI:82748"/>
        <dbReference type="EC" id="2.1.1.206"/>
    </reaction>
</comment>
<comment type="subunit">
    <text evidence="1">Homodimer.</text>
</comment>
<comment type="subcellular location">
    <subcellularLocation>
        <location evidence="1">Cytoplasm</location>
    </subcellularLocation>
</comment>
<comment type="similarity">
    <text evidence="1">Belongs to the aTrm56 family.</text>
</comment>
<gene>
    <name type="ordered locus">NP_4110A</name>
</gene>
<keyword id="KW-0963">Cytoplasm</keyword>
<keyword id="KW-0489">Methyltransferase</keyword>
<keyword id="KW-1185">Reference proteome</keyword>
<keyword id="KW-0949">S-adenosyl-L-methionine</keyword>
<keyword id="KW-0808">Transferase</keyword>
<keyword id="KW-0819">tRNA processing</keyword>
<evidence type="ECO:0000255" key="1">
    <source>
        <dbReference type="HAMAP-Rule" id="MF_00077"/>
    </source>
</evidence>
<organism>
    <name type="scientific">Natronomonas pharaonis (strain ATCC 35678 / DSM 2160 / CIP 103997 / JCM 8858 / NBRC 14720 / NCIMB 2260 / Gabara)</name>
    <name type="common">Halobacterium pharaonis</name>
    <dbReference type="NCBI Taxonomy" id="348780"/>
    <lineage>
        <taxon>Archaea</taxon>
        <taxon>Methanobacteriati</taxon>
        <taxon>Methanobacteriota</taxon>
        <taxon>Stenosarchaea group</taxon>
        <taxon>Halobacteria</taxon>
        <taxon>Halobacteriales</taxon>
        <taxon>Haloarculaceae</taxon>
        <taxon>Natronomonas</taxon>
    </lineage>
</organism>
<reference key="1">
    <citation type="journal article" date="2005" name="Genome Res.">
        <title>Living with two extremes: conclusions from the genome sequence of Natronomonas pharaonis.</title>
        <authorList>
            <person name="Falb M."/>
            <person name="Pfeiffer F."/>
            <person name="Palm P."/>
            <person name="Rodewald K."/>
            <person name="Hickmann V."/>
            <person name="Tittor J."/>
            <person name="Oesterhelt D."/>
        </authorList>
    </citation>
    <scope>NUCLEOTIDE SEQUENCE [LARGE SCALE GENOMIC DNA]</scope>
    <source>
        <strain>ATCC 35678 / DSM 2160 / CIP 103997 / JCM 8858 / NBRC 14720 / NCIMB 2260 / Gabara</strain>
    </source>
</reference>
<dbReference type="EC" id="2.1.1.206" evidence="1"/>
<dbReference type="EMBL" id="CR936257">
    <property type="protein sequence ID" value="CAI50146.1"/>
    <property type="molecule type" value="Genomic_DNA"/>
</dbReference>
<dbReference type="RefSeq" id="WP_011323762.1">
    <property type="nucleotide sequence ID" value="NC_007426.1"/>
</dbReference>
<dbReference type="SMR" id="Q3IP06"/>
<dbReference type="STRING" id="348780.NP_4110A"/>
<dbReference type="EnsemblBacteria" id="CAI50146">
    <property type="protein sequence ID" value="CAI50146"/>
    <property type="gene ID" value="NP_4110A"/>
</dbReference>
<dbReference type="GeneID" id="3701976"/>
<dbReference type="KEGG" id="nph:NP_4110A"/>
<dbReference type="eggNOG" id="arCOG01857">
    <property type="taxonomic scope" value="Archaea"/>
</dbReference>
<dbReference type="HOGENOM" id="CLU_123709_0_0_2"/>
<dbReference type="OrthoDB" id="14397at2157"/>
<dbReference type="Proteomes" id="UP000002698">
    <property type="component" value="Chromosome"/>
</dbReference>
<dbReference type="GO" id="GO:0005737">
    <property type="term" value="C:cytoplasm"/>
    <property type="evidence" value="ECO:0007669"/>
    <property type="project" value="UniProtKB-SubCell"/>
</dbReference>
<dbReference type="GO" id="GO:0106059">
    <property type="term" value="F:tRNA (cytidine(56)-2'-O)-methyltransferase activity"/>
    <property type="evidence" value="ECO:0007669"/>
    <property type="project" value="UniProtKB-EC"/>
</dbReference>
<dbReference type="GO" id="GO:0002128">
    <property type="term" value="P:tRNA nucleoside ribose methylation"/>
    <property type="evidence" value="ECO:0007669"/>
    <property type="project" value="UniProtKB-UniRule"/>
</dbReference>
<dbReference type="CDD" id="cd18083">
    <property type="entry name" value="aTrm56-like"/>
    <property type="match status" value="1"/>
</dbReference>
<dbReference type="Gene3D" id="3.40.1280.10">
    <property type="match status" value="1"/>
</dbReference>
<dbReference type="HAMAP" id="MF_00077">
    <property type="entry name" value="tRNA_methyltr_aTrm56"/>
    <property type="match status" value="1"/>
</dbReference>
<dbReference type="InterPro" id="IPR029028">
    <property type="entry name" value="Alpha/beta_knot_MTases"/>
</dbReference>
<dbReference type="InterPro" id="IPR029026">
    <property type="entry name" value="tRNA_m1G_MTases_N"/>
</dbReference>
<dbReference type="InterPro" id="IPR002845">
    <property type="entry name" value="tRNA_mtfrase_aTrm56"/>
</dbReference>
<dbReference type="NCBIfam" id="NF003048">
    <property type="entry name" value="PRK03958.1"/>
    <property type="match status" value="1"/>
</dbReference>
<dbReference type="PANTHER" id="PTHR42197">
    <property type="entry name" value="TRNA (CYTIDINE(56)-2'-O)-METHYLTRANSFERASE"/>
    <property type="match status" value="1"/>
</dbReference>
<dbReference type="PANTHER" id="PTHR42197:SF1">
    <property type="entry name" value="TRNA (CYTIDINE(56)-2'-O)-METHYLTRANSFERASE"/>
    <property type="match status" value="1"/>
</dbReference>
<dbReference type="Pfam" id="PF01994">
    <property type="entry name" value="Trm56"/>
    <property type="match status" value="1"/>
</dbReference>
<dbReference type="PIRSF" id="PIRSF016123">
    <property type="entry name" value="UCP016123"/>
    <property type="match status" value="1"/>
</dbReference>
<dbReference type="SUPFAM" id="SSF75217">
    <property type="entry name" value="alpha/beta knot"/>
    <property type="match status" value="1"/>
</dbReference>